<keyword id="KW-0378">Hydrolase</keyword>
<keyword id="KW-0460">Magnesium</keyword>
<keyword id="KW-0479">Metal-binding</keyword>
<keyword id="KW-0546">Nucleotide metabolism</keyword>
<keyword id="KW-0547">Nucleotide-binding</keyword>
<gene>
    <name type="ordered locus">SPs1596</name>
</gene>
<accession>P0DB59</accession>
<accession>Q8K8I7</accession>
<reference key="1">
    <citation type="journal article" date="2003" name="Genome Res.">
        <title>Genome sequence of an M3 strain of Streptococcus pyogenes reveals a large-scale genomic rearrangement in invasive strains and new insights into phage evolution.</title>
        <authorList>
            <person name="Nakagawa I."/>
            <person name="Kurokawa K."/>
            <person name="Yamashita A."/>
            <person name="Nakata M."/>
            <person name="Tomiyasu Y."/>
            <person name="Okahashi N."/>
            <person name="Kawabata S."/>
            <person name="Yamazaki K."/>
            <person name="Shiba T."/>
            <person name="Yasunaga T."/>
            <person name="Hayashi H."/>
            <person name="Hattori M."/>
            <person name="Hamada S."/>
        </authorList>
    </citation>
    <scope>NUCLEOTIDE SEQUENCE [LARGE SCALE GENOMIC DNA]</scope>
    <source>
        <strain>SSI-1</strain>
    </source>
</reference>
<feature type="chain" id="PRO_0000411367" description="dITP/XTP pyrophosphatase">
    <location>
        <begin position="1"/>
        <end position="328"/>
    </location>
</feature>
<feature type="region of interest" description="Unknown">
    <location>
        <begin position="1"/>
        <end position="129"/>
    </location>
</feature>
<feature type="region of interest" description="NTP pyrophosphatase">
    <location>
        <begin position="130"/>
        <end position="324"/>
    </location>
</feature>
<feature type="active site" description="Proton acceptor" evidence="1">
    <location>
        <position position="196"/>
    </location>
</feature>
<feature type="binding site" evidence="1">
    <location>
        <begin position="134"/>
        <end position="139"/>
    </location>
    <ligand>
        <name>substrate</name>
    </ligand>
</feature>
<feature type="binding site" evidence="1">
    <location>
        <position position="196"/>
    </location>
    <ligand>
        <name>Mg(2+)</name>
        <dbReference type="ChEBI" id="CHEBI:18420"/>
    </ligand>
</feature>
<feature type="binding site" evidence="1">
    <location>
        <position position="197"/>
    </location>
    <ligand>
        <name>substrate</name>
    </ligand>
</feature>
<feature type="binding site" evidence="1">
    <location>
        <begin position="280"/>
        <end position="283"/>
    </location>
    <ligand>
        <name>substrate</name>
    </ligand>
</feature>
<feature type="binding site" evidence="1">
    <location>
        <position position="303"/>
    </location>
    <ligand>
        <name>substrate</name>
    </ligand>
</feature>
<feature type="binding site" evidence="1">
    <location>
        <begin position="308"/>
        <end position="309"/>
    </location>
    <ligand>
        <name>substrate</name>
    </ligand>
</feature>
<proteinExistence type="inferred from homology"/>
<organism>
    <name type="scientific">Streptococcus pyogenes serotype M3 (strain SSI-1)</name>
    <dbReference type="NCBI Taxonomy" id="193567"/>
    <lineage>
        <taxon>Bacteria</taxon>
        <taxon>Bacillati</taxon>
        <taxon>Bacillota</taxon>
        <taxon>Bacilli</taxon>
        <taxon>Lactobacillales</taxon>
        <taxon>Streptococcaceae</taxon>
        <taxon>Streptococcus</taxon>
    </lineage>
</organism>
<evidence type="ECO:0000255" key="1">
    <source>
        <dbReference type="HAMAP-Rule" id="MF_01405"/>
    </source>
</evidence>
<evidence type="ECO:0000305" key="2"/>
<protein>
    <recommendedName>
        <fullName evidence="1">dITP/XTP pyrophosphatase</fullName>
        <ecNumber evidence="1">3.6.1.66</ecNumber>
    </recommendedName>
    <alternativeName>
        <fullName evidence="1">Non-canonical purine NTP pyrophosphatase</fullName>
    </alternativeName>
    <alternativeName>
        <fullName evidence="1">Non-standard purine NTP pyrophosphatase</fullName>
    </alternativeName>
    <alternativeName>
        <fullName evidence="1">Nucleoside-triphosphate diphosphatase</fullName>
    </alternativeName>
    <alternativeName>
        <fullName evidence="1">Nucleoside-triphosphate pyrophosphatase</fullName>
        <shortName evidence="1">NTPase</shortName>
    </alternativeName>
</protein>
<dbReference type="EC" id="3.6.1.66" evidence="1"/>
<dbReference type="EMBL" id="BA000034">
    <property type="protein sequence ID" value="BAC64691.1"/>
    <property type="molecule type" value="Genomic_DNA"/>
</dbReference>
<dbReference type="RefSeq" id="WP_011054210.1">
    <property type="nucleotide sequence ID" value="NC_004606.1"/>
</dbReference>
<dbReference type="SMR" id="P0DB59"/>
<dbReference type="KEGG" id="sps:SPs1596"/>
<dbReference type="HOGENOM" id="CLU_863088_0_0_9"/>
<dbReference type="GO" id="GO:0005829">
    <property type="term" value="C:cytosol"/>
    <property type="evidence" value="ECO:0007669"/>
    <property type="project" value="TreeGrafter"/>
</dbReference>
<dbReference type="GO" id="GO:0035870">
    <property type="term" value="F:dITP diphosphatase activity"/>
    <property type="evidence" value="ECO:0007669"/>
    <property type="project" value="RHEA"/>
</dbReference>
<dbReference type="GO" id="GO:0036220">
    <property type="term" value="F:ITP diphosphatase activity"/>
    <property type="evidence" value="ECO:0007669"/>
    <property type="project" value="UniProtKB-EC"/>
</dbReference>
<dbReference type="GO" id="GO:0046872">
    <property type="term" value="F:metal ion binding"/>
    <property type="evidence" value="ECO:0007669"/>
    <property type="project" value="UniProtKB-KW"/>
</dbReference>
<dbReference type="GO" id="GO:0000166">
    <property type="term" value="F:nucleotide binding"/>
    <property type="evidence" value="ECO:0007669"/>
    <property type="project" value="UniProtKB-KW"/>
</dbReference>
<dbReference type="GO" id="GO:0017111">
    <property type="term" value="F:ribonucleoside triphosphate phosphatase activity"/>
    <property type="evidence" value="ECO:0007669"/>
    <property type="project" value="InterPro"/>
</dbReference>
<dbReference type="GO" id="GO:0036222">
    <property type="term" value="F:XTP diphosphatase activity"/>
    <property type="evidence" value="ECO:0007669"/>
    <property type="project" value="RHEA"/>
</dbReference>
<dbReference type="GO" id="GO:0009117">
    <property type="term" value="P:nucleotide metabolic process"/>
    <property type="evidence" value="ECO:0007669"/>
    <property type="project" value="UniProtKB-KW"/>
</dbReference>
<dbReference type="GO" id="GO:0009146">
    <property type="term" value="P:purine nucleoside triphosphate catabolic process"/>
    <property type="evidence" value="ECO:0007669"/>
    <property type="project" value="UniProtKB-UniRule"/>
</dbReference>
<dbReference type="CDD" id="cd00515">
    <property type="entry name" value="HAM1"/>
    <property type="match status" value="1"/>
</dbReference>
<dbReference type="FunFam" id="3.90.950.10:FF:000001">
    <property type="entry name" value="dITP/XTP pyrophosphatase"/>
    <property type="match status" value="1"/>
</dbReference>
<dbReference type="Gene3D" id="3.90.950.10">
    <property type="match status" value="1"/>
</dbReference>
<dbReference type="HAMAP" id="MF_01405">
    <property type="entry name" value="Non_canon_purine_NTPase"/>
    <property type="match status" value="1"/>
</dbReference>
<dbReference type="InterPro" id="IPR020922">
    <property type="entry name" value="dITP/XTP_pyrophosphatase"/>
</dbReference>
<dbReference type="InterPro" id="IPR029001">
    <property type="entry name" value="ITPase-like_fam"/>
</dbReference>
<dbReference type="InterPro" id="IPR002637">
    <property type="entry name" value="RdgB/HAM1"/>
</dbReference>
<dbReference type="NCBIfam" id="NF002698">
    <property type="entry name" value="PRK02491.1"/>
    <property type="match status" value="1"/>
</dbReference>
<dbReference type="NCBIfam" id="NF011397">
    <property type="entry name" value="PRK14822.1"/>
    <property type="match status" value="1"/>
</dbReference>
<dbReference type="NCBIfam" id="TIGR00042">
    <property type="entry name" value="RdgB/HAM1 family non-canonical purine NTP pyrophosphatase"/>
    <property type="match status" value="1"/>
</dbReference>
<dbReference type="PANTHER" id="PTHR11067:SF9">
    <property type="entry name" value="INOSINE TRIPHOSPHATE PYROPHOSPHATASE"/>
    <property type="match status" value="1"/>
</dbReference>
<dbReference type="PANTHER" id="PTHR11067">
    <property type="entry name" value="INOSINE TRIPHOSPHATE PYROPHOSPHATASE/HAM1 PROTEIN"/>
    <property type="match status" value="1"/>
</dbReference>
<dbReference type="Pfam" id="PF01725">
    <property type="entry name" value="Ham1p_like"/>
    <property type="match status" value="1"/>
</dbReference>
<dbReference type="SUPFAM" id="SSF52972">
    <property type="entry name" value="ITPase-like"/>
    <property type="match status" value="1"/>
</dbReference>
<comment type="function">
    <text evidence="1">Pyrophosphatase that catalyzes the hydrolysis of nucleoside triphosphates to their monophosphate derivatives, with a high preference for the non-canonical purine nucleotides XTP (xanthosine triphosphate), dITP (deoxyinosine triphosphate) and ITP. Seems to function as a house-cleaning enzyme that removes non-canonical purine nucleotides from the nucleotide pool, thus preventing their incorporation into DNA/RNA and avoiding chromosomal lesions.</text>
</comment>
<comment type="catalytic activity">
    <reaction evidence="1">
        <text>XTP + H2O = XMP + diphosphate + H(+)</text>
        <dbReference type="Rhea" id="RHEA:28610"/>
        <dbReference type="ChEBI" id="CHEBI:15377"/>
        <dbReference type="ChEBI" id="CHEBI:15378"/>
        <dbReference type="ChEBI" id="CHEBI:33019"/>
        <dbReference type="ChEBI" id="CHEBI:57464"/>
        <dbReference type="ChEBI" id="CHEBI:61314"/>
        <dbReference type="EC" id="3.6.1.66"/>
    </reaction>
</comment>
<comment type="catalytic activity">
    <reaction evidence="1">
        <text>dITP + H2O = dIMP + diphosphate + H(+)</text>
        <dbReference type="Rhea" id="RHEA:28342"/>
        <dbReference type="ChEBI" id="CHEBI:15377"/>
        <dbReference type="ChEBI" id="CHEBI:15378"/>
        <dbReference type="ChEBI" id="CHEBI:33019"/>
        <dbReference type="ChEBI" id="CHEBI:61194"/>
        <dbReference type="ChEBI" id="CHEBI:61382"/>
        <dbReference type="EC" id="3.6.1.66"/>
    </reaction>
</comment>
<comment type="catalytic activity">
    <reaction evidence="1">
        <text>ITP + H2O = IMP + diphosphate + H(+)</text>
        <dbReference type="Rhea" id="RHEA:29399"/>
        <dbReference type="ChEBI" id="CHEBI:15377"/>
        <dbReference type="ChEBI" id="CHEBI:15378"/>
        <dbReference type="ChEBI" id="CHEBI:33019"/>
        <dbReference type="ChEBI" id="CHEBI:58053"/>
        <dbReference type="ChEBI" id="CHEBI:61402"/>
        <dbReference type="EC" id="3.6.1.66"/>
    </reaction>
</comment>
<comment type="cofactor">
    <cofactor evidence="1">
        <name>Mg(2+)</name>
        <dbReference type="ChEBI" id="CHEBI:18420"/>
    </cofactor>
    <text evidence="1">Binds 1 Mg(2+) ion per subunit.</text>
</comment>
<comment type="subunit">
    <text evidence="1">Homodimer.</text>
</comment>
<comment type="similarity">
    <text evidence="1 2">Belongs to the HAM1 NTPase family.</text>
</comment>
<sequence>MSEKIYEYKDENNWFIGKMTGHNLISGWGVKHTTIKKIDDLLDGIAATLDWENPKGYDVSVVRYQSPLSLITFIIDMINQETQREIKVTPHAGTILLIENAKLLAVYLPEGGVSTATFFATSEQGFGDIILIATRNEGKTKEFRNLFGQLGYRVENLNDYPELPEVAETGTTFEENARLKAETISRLTGKMVLADDSGLKVDALGGLPGVWSARFSGPDATDAKNNTKLLHELAMVFDQKKRSAQFHTTLVVAAPNKDSLVMEAEWPGYIATQPKGENGFGYDPVFIVGETGRHAAELEADQKNQLSHRGQAVRKLMEVFPAWQAKQS</sequence>
<name>IXTPA_STRPQ</name>